<organism>
    <name type="scientific">Campylobacter jejuni (strain RM1221)</name>
    <dbReference type="NCBI Taxonomy" id="195099"/>
    <lineage>
        <taxon>Bacteria</taxon>
        <taxon>Pseudomonadati</taxon>
        <taxon>Campylobacterota</taxon>
        <taxon>Epsilonproteobacteria</taxon>
        <taxon>Campylobacterales</taxon>
        <taxon>Campylobacteraceae</taxon>
        <taxon>Campylobacter</taxon>
    </lineage>
</organism>
<sequence>MIISAKFITSLVKFDENLSSNFSEVAFLGRSNVGKSSLINSLCKQKNLAKSSATPGKTQLINFFEVICKRNEEKFNINFIDLPGFGYAKVSKNLKEIWNQNLDEFLKLRTSIKLFIHLIDSRHTHLEIDVNLNDYLKRFLRPDQKILKVFTKCDKLNQSEKAKLKNEFKDSILVSNLNKFGLDSLEDIIINQTLGLDK</sequence>
<name>ENGB_CAMJR</name>
<reference key="1">
    <citation type="journal article" date="2005" name="PLoS Biol.">
        <title>Major structural differences and novel potential virulence mechanisms from the genomes of multiple Campylobacter species.</title>
        <authorList>
            <person name="Fouts D.E."/>
            <person name="Mongodin E.F."/>
            <person name="Mandrell R.E."/>
            <person name="Miller W.G."/>
            <person name="Rasko D.A."/>
            <person name="Ravel J."/>
            <person name="Brinkac L.M."/>
            <person name="DeBoy R.T."/>
            <person name="Parker C.T."/>
            <person name="Daugherty S.C."/>
            <person name="Dodson R.J."/>
            <person name="Durkin A.S."/>
            <person name="Madupu R."/>
            <person name="Sullivan S.A."/>
            <person name="Shetty J.U."/>
            <person name="Ayodeji M.A."/>
            <person name="Shvartsbeyn A."/>
            <person name="Schatz M.C."/>
            <person name="Badger J.H."/>
            <person name="Fraser C.M."/>
            <person name="Nelson K.E."/>
        </authorList>
    </citation>
    <scope>NUCLEOTIDE SEQUENCE [LARGE SCALE GENOMIC DNA]</scope>
    <source>
        <strain>RM1221</strain>
    </source>
</reference>
<keyword id="KW-0131">Cell cycle</keyword>
<keyword id="KW-0132">Cell division</keyword>
<keyword id="KW-0342">GTP-binding</keyword>
<keyword id="KW-0460">Magnesium</keyword>
<keyword id="KW-0479">Metal-binding</keyword>
<keyword id="KW-0547">Nucleotide-binding</keyword>
<keyword id="KW-0717">Septation</keyword>
<evidence type="ECO:0000255" key="1">
    <source>
        <dbReference type="HAMAP-Rule" id="MF_00321"/>
    </source>
</evidence>
<comment type="function">
    <text evidence="1">Necessary for normal cell division and for the maintenance of normal septation.</text>
</comment>
<comment type="cofactor">
    <cofactor evidence="1">
        <name>Mg(2+)</name>
        <dbReference type="ChEBI" id="CHEBI:18420"/>
    </cofactor>
</comment>
<comment type="similarity">
    <text evidence="1">Belongs to the TRAFAC class TrmE-Era-EngA-EngB-Septin-like GTPase superfamily. EngB GTPase family.</text>
</comment>
<accession>Q5HVC1</accession>
<gene>
    <name evidence="1" type="primary">engB</name>
    <name type="ordered locus">CJE0753</name>
</gene>
<protein>
    <recommendedName>
        <fullName evidence="1">Probable GTP-binding protein EngB</fullName>
    </recommendedName>
</protein>
<dbReference type="EMBL" id="CP000025">
    <property type="protein sequence ID" value="AAW34546.1"/>
    <property type="molecule type" value="Genomic_DNA"/>
</dbReference>
<dbReference type="SMR" id="Q5HVC1"/>
<dbReference type="KEGG" id="cjr:CJE0753"/>
<dbReference type="HOGENOM" id="CLU_033732_3_2_7"/>
<dbReference type="GO" id="GO:0005829">
    <property type="term" value="C:cytosol"/>
    <property type="evidence" value="ECO:0007669"/>
    <property type="project" value="TreeGrafter"/>
</dbReference>
<dbReference type="GO" id="GO:0005525">
    <property type="term" value="F:GTP binding"/>
    <property type="evidence" value="ECO:0007669"/>
    <property type="project" value="UniProtKB-UniRule"/>
</dbReference>
<dbReference type="GO" id="GO:0046872">
    <property type="term" value="F:metal ion binding"/>
    <property type="evidence" value="ECO:0007669"/>
    <property type="project" value="UniProtKB-KW"/>
</dbReference>
<dbReference type="GO" id="GO:0000917">
    <property type="term" value="P:division septum assembly"/>
    <property type="evidence" value="ECO:0007669"/>
    <property type="project" value="UniProtKB-KW"/>
</dbReference>
<dbReference type="CDD" id="cd01876">
    <property type="entry name" value="YihA_EngB"/>
    <property type="match status" value="1"/>
</dbReference>
<dbReference type="Gene3D" id="3.40.50.300">
    <property type="entry name" value="P-loop containing nucleotide triphosphate hydrolases"/>
    <property type="match status" value="1"/>
</dbReference>
<dbReference type="HAMAP" id="MF_00321">
    <property type="entry name" value="GTPase_EngB"/>
    <property type="match status" value="1"/>
</dbReference>
<dbReference type="InterPro" id="IPR030393">
    <property type="entry name" value="G_ENGB_dom"/>
</dbReference>
<dbReference type="InterPro" id="IPR006073">
    <property type="entry name" value="GTP-bd"/>
</dbReference>
<dbReference type="InterPro" id="IPR019987">
    <property type="entry name" value="GTP-bd_ribosome_bio_YsxC"/>
</dbReference>
<dbReference type="InterPro" id="IPR027417">
    <property type="entry name" value="P-loop_NTPase"/>
</dbReference>
<dbReference type="InterPro" id="IPR005225">
    <property type="entry name" value="Small_GTP-bd"/>
</dbReference>
<dbReference type="NCBIfam" id="TIGR03598">
    <property type="entry name" value="GTPase_YsxC"/>
    <property type="match status" value="1"/>
</dbReference>
<dbReference type="NCBIfam" id="TIGR00231">
    <property type="entry name" value="small_GTP"/>
    <property type="match status" value="1"/>
</dbReference>
<dbReference type="PANTHER" id="PTHR11649:SF13">
    <property type="entry name" value="ENGB-TYPE G DOMAIN-CONTAINING PROTEIN"/>
    <property type="match status" value="1"/>
</dbReference>
<dbReference type="PANTHER" id="PTHR11649">
    <property type="entry name" value="MSS1/TRME-RELATED GTP-BINDING PROTEIN"/>
    <property type="match status" value="1"/>
</dbReference>
<dbReference type="Pfam" id="PF01926">
    <property type="entry name" value="MMR_HSR1"/>
    <property type="match status" value="1"/>
</dbReference>
<dbReference type="SUPFAM" id="SSF52540">
    <property type="entry name" value="P-loop containing nucleoside triphosphate hydrolases"/>
    <property type="match status" value="1"/>
</dbReference>
<dbReference type="PROSITE" id="PS51706">
    <property type="entry name" value="G_ENGB"/>
    <property type="match status" value="1"/>
</dbReference>
<proteinExistence type="inferred from homology"/>
<feature type="chain" id="PRO_0000266839" description="Probable GTP-binding protein EngB">
    <location>
        <begin position="1"/>
        <end position="198"/>
    </location>
</feature>
<feature type="domain" description="EngB-type G" evidence="1">
    <location>
        <begin position="21"/>
        <end position="195"/>
    </location>
</feature>
<feature type="binding site" evidence="1">
    <location>
        <begin position="29"/>
        <end position="36"/>
    </location>
    <ligand>
        <name>GTP</name>
        <dbReference type="ChEBI" id="CHEBI:37565"/>
    </ligand>
</feature>
<feature type="binding site" evidence="1">
    <location>
        <position position="36"/>
    </location>
    <ligand>
        <name>Mg(2+)</name>
        <dbReference type="ChEBI" id="CHEBI:18420"/>
    </ligand>
</feature>
<feature type="binding site" evidence="1">
    <location>
        <begin position="56"/>
        <end position="60"/>
    </location>
    <ligand>
        <name>GTP</name>
        <dbReference type="ChEBI" id="CHEBI:37565"/>
    </ligand>
</feature>
<feature type="binding site" evidence="1">
    <location>
        <position position="58"/>
    </location>
    <ligand>
        <name>Mg(2+)</name>
        <dbReference type="ChEBI" id="CHEBI:18420"/>
    </ligand>
</feature>
<feature type="binding site" evidence="1">
    <location>
        <begin position="81"/>
        <end position="84"/>
    </location>
    <ligand>
        <name>GTP</name>
        <dbReference type="ChEBI" id="CHEBI:37565"/>
    </ligand>
</feature>
<feature type="binding site" evidence="1">
    <location>
        <begin position="151"/>
        <end position="154"/>
    </location>
    <ligand>
        <name>GTP</name>
        <dbReference type="ChEBI" id="CHEBI:37565"/>
    </ligand>
</feature>
<feature type="binding site" evidence="1">
    <location>
        <begin position="174"/>
        <end position="176"/>
    </location>
    <ligand>
        <name>GTP</name>
        <dbReference type="ChEBI" id="CHEBI:37565"/>
    </ligand>
</feature>